<reference key="1">
    <citation type="journal article" date="2003" name="J. Gen. Virol.">
        <title>Complete nucleotide sequence of Pelargonium zonate spot virus and its relationship with the family Bromoviridae.</title>
        <authorList>
            <person name="Finetti-Sialer M."/>
            <person name="Gallitelli D."/>
        </authorList>
    </citation>
    <scope>NUCLEOTIDE SEQUENCE [GENOMIC RNA]</scope>
    <source>
        <strain>tomato</strain>
    </source>
</reference>
<comment type="function">
    <text evidence="1">Involved in the virus replication. Contains a helicase domain and a methyltransferase domain. The methyltransferase domain is probably involved in viral RNA capping. Involved in the formation of ER membrane spherular invaginations in which RNA replication complexes form (By similarity).</text>
</comment>
<comment type="subunit">
    <text evidence="1">Interacts with RNA-directed RNA polymerase 2a.</text>
</comment>
<comment type="subcellular location">
    <subcellularLocation>
        <location evidence="1">Host endoplasmic reticulum membrane</location>
        <topology evidence="1">Peripheral membrane protein</topology>
    </subcellularLocation>
</comment>
<comment type="similarity">
    <text evidence="4">Belongs to the bromoviridae replication protein 1a family.</text>
</comment>
<sequence>MAATSFNVRDLINSNGADAMGVRGLVDAHATKAAEEQFEYIKRSKKVWVRQILSASDGEKMQKRFGGTFDLQLSKNLCPHSFAGAMRQCETLECLSSFPEDSLILDFGGSWLFHWQRQHNVHSCCPVLDARDMARHQERMISMQKCVAHRPGKFESFESPDFCLLKAEDCEVQSPYAISIHGAYDMGFEGLCKAMHSHGTIMLRGTMMFDANMLVFNEGVMEDLNCRWTKEKGDPYGLRGAPCEDMVHFDFIDESTLSYSHSWKNIKSFLTEGGYQIGNVQYVLERCVISYGIMSFKIFAVSGKIPHTRLRHCVWFPKVRDYVNINPSDPRIWSKVRVKLDTVREVEEICFRCPKDVSKIEVMGGESETCGIMSVLYSSTIIVNGMTMMAGERLDVLDYHHVAFSLMLSARRKFDMFGKAMNSLEWKGWVSHFFKSLWPSGDLRDLFGRYFPSLIRYYDKIEFVEKLTHCEVFVNELGMTDDKEQRDVVAEAADVLKNTLLKVAIKMSLDKTFRPAEEKKEERTTTTTVTSSAVGDVDERPAGTVSGPTIQAPSVTQENTVTSLSEPLDGRLAVRLEAMKEYKRYLLKLQKNTESNLAGLWSLCGGTSDSNNLISTEVLRIMRQSDSLVNLHKADGGWLFPNDFEYMVGYNSSGLGEKRPNEVFLVNKDCVLNNNVLLANGVPAQPPKGNINLMDGVAGCGKTTAIKRAFVFESDLIVTANKKSSEDILKAMFRDTPDIGRNKVRTADSVLMHGVAHKVKRVLFDEVSLVHFGQLCAILTISGAEELIGFGDSEQISFVSRDRLFDMKYHKLSPDSSDQQIRTFRCPKDVVECVKIMARKVGARGSKYNNWFTTSAVRKSLGYHKVSSINESPLRPDVHYLTMTQADKASLLSKARETRFRPSVSTIDEVIKTTHESQGISVPKVILWRGKSTKCDLFTDKMELRFGCCHQASRKFRLLFGC</sequence>
<gene>
    <name type="ORF">ORF1a</name>
</gene>
<keyword id="KW-0067">ATP-binding</keyword>
<keyword id="KW-0347">Helicase</keyword>
<keyword id="KW-1038">Host endoplasmic reticulum</keyword>
<keyword id="KW-1043">Host membrane</keyword>
<keyword id="KW-0378">Hydrolase</keyword>
<keyword id="KW-0472">Membrane</keyword>
<keyword id="KW-0489">Methyltransferase</keyword>
<keyword id="KW-0547">Nucleotide-binding</keyword>
<keyword id="KW-1185">Reference proteome</keyword>
<keyword id="KW-0808">Transferase</keyword>
<name>1A_PZSVT</name>
<protein>
    <recommendedName>
        <fullName>Replication protein 1a</fullName>
    </recommendedName>
    <domain>
        <recommendedName>
            <fullName>ATP-dependent helicase</fullName>
            <ecNumber>3.6.4.-</ecNumber>
        </recommendedName>
    </domain>
    <domain>
        <recommendedName>
            <fullName>Methyltransferase</fullName>
            <ecNumber>2.1.1.-</ecNumber>
        </recommendedName>
    </domain>
</protein>
<accession>Q9DUT3</accession>
<dbReference type="EC" id="3.6.4.-"/>
<dbReference type="EC" id="2.1.1.-"/>
<dbReference type="EMBL" id="AJ272327">
    <property type="protein sequence ID" value="CAC08526.1"/>
    <property type="molecule type" value="Genomic_RNA"/>
</dbReference>
<dbReference type="RefSeq" id="NP_619770.1">
    <property type="nucleotide sequence ID" value="NC_003649.1"/>
</dbReference>
<dbReference type="KEGG" id="vg:956568"/>
<dbReference type="Proteomes" id="UP000000411">
    <property type="component" value="Genome"/>
</dbReference>
<dbReference type="GO" id="GO:0044167">
    <property type="term" value="C:host cell endoplasmic reticulum membrane"/>
    <property type="evidence" value="ECO:0007669"/>
    <property type="project" value="UniProtKB-SubCell"/>
</dbReference>
<dbReference type="GO" id="GO:0016020">
    <property type="term" value="C:membrane"/>
    <property type="evidence" value="ECO:0007669"/>
    <property type="project" value="UniProtKB-KW"/>
</dbReference>
<dbReference type="GO" id="GO:0005524">
    <property type="term" value="F:ATP binding"/>
    <property type="evidence" value="ECO:0007669"/>
    <property type="project" value="UniProtKB-KW"/>
</dbReference>
<dbReference type="GO" id="GO:0004386">
    <property type="term" value="F:helicase activity"/>
    <property type="evidence" value="ECO:0007669"/>
    <property type="project" value="UniProtKB-KW"/>
</dbReference>
<dbReference type="GO" id="GO:0016817">
    <property type="term" value="F:hydrolase activity, acting on acid anhydrides"/>
    <property type="evidence" value="ECO:0007669"/>
    <property type="project" value="InterPro"/>
</dbReference>
<dbReference type="GO" id="GO:0008174">
    <property type="term" value="F:mRNA methyltransferase activity"/>
    <property type="evidence" value="ECO:0007669"/>
    <property type="project" value="InterPro"/>
</dbReference>
<dbReference type="GO" id="GO:0003723">
    <property type="term" value="F:RNA binding"/>
    <property type="evidence" value="ECO:0007669"/>
    <property type="project" value="InterPro"/>
</dbReference>
<dbReference type="GO" id="GO:0032259">
    <property type="term" value="P:methylation"/>
    <property type="evidence" value="ECO:0007669"/>
    <property type="project" value="UniProtKB-KW"/>
</dbReference>
<dbReference type="GO" id="GO:0016556">
    <property type="term" value="P:mRNA modification"/>
    <property type="evidence" value="ECO:0007669"/>
    <property type="project" value="InterPro"/>
</dbReference>
<dbReference type="GO" id="GO:0006396">
    <property type="term" value="P:RNA processing"/>
    <property type="evidence" value="ECO:0007669"/>
    <property type="project" value="InterPro"/>
</dbReference>
<dbReference type="Gene3D" id="3.40.50.300">
    <property type="entry name" value="P-loop containing nucleotide triphosphate hydrolases"/>
    <property type="match status" value="2"/>
</dbReference>
<dbReference type="InterPro" id="IPR027351">
    <property type="entry name" value="(+)RNA_virus_helicase_core_dom"/>
</dbReference>
<dbReference type="InterPro" id="IPR021002">
    <property type="entry name" value="1a_necrotic_phenotyp-det_dom"/>
</dbReference>
<dbReference type="InterPro" id="IPR002588">
    <property type="entry name" value="Alphavirus-like_MT_dom"/>
</dbReference>
<dbReference type="InterPro" id="IPR022184">
    <property type="entry name" value="CMV_1a_C"/>
</dbReference>
<dbReference type="InterPro" id="IPR027417">
    <property type="entry name" value="P-loop_NTPase"/>
</dbReference>
<dbReference type="Pfam" id="PF12467">
    <property type="entry name" value="CMV_1a"/>
    <property type="match status" value="1"/>
</dbReference>
<dbReference type="Pfam" id="PF12503">
    <property type="entry name" value="CMV_1a_C"/>
    <property type="match status" value="1"/>
</dbReference>
<dbReference type="Pfam" id="PF01443">
    <property type="entry name" value="Viral_helicase1"/>
    <property type="match status" value="1"/>
</dbReference>
<dbReference type="Pfam" id="PF01660">
    <property type="entry name" value="Vmethyltransf"/>
    <property type="match status" value="1"/>
</dbReference>
<dbReference type="SUPFAM" id="SSF52540">
    <property type="entry name" value="P-loop containing nucleoside triphosphate hydrolases"/>
    <property type="match status" value="1"/>
</dbReference>
<dbReference type="PROSITE" id="PS51743">
    <property type="entry name" value="ALPHAVIRUS_MT"/>
    <property type="match status" value="1"/>
</dbReference>
<dbReference type="PROSITE" id="PS51657">
    <property type="entry name" value="PSRV_HELICASE"/>
    <property type="match status" value="1"/>
</dbReference>
<organismHost>
    <name type="scientific">Solanum lycopersicum</name>
    <name type="common">Tomato</name>
    <name type="synonym">Lycopersicon esculentum</name>
    <dbReference type="NCBI Taxonomy" id="4081"/>
</organismHost>
<organism>
    <name type="scientific">Pelargonium zonate spot virus (isolate Tomato/Italy/1982)</name>
    <name type="common">PZSV</name>
    <name type="synonym">Pelargonium zonate spot virus (isolate Tomato)</name>
    <dbReference type="NCBI Taxonomy" id="650488"/>
    <lineage>
        <taxon>Viruses</taxon>
        <taxon>Riboviria</taxon>
        <taxon>Orthornavirae</taxon>
        <taxon>Kitrinoviricota</taxon>
        <taxon>Alsuviricetes</taxon>
        <taxon>Martellivirales</taxon>
        <taxon>Bromoviridae</taxon>
        <taxon>Anulavirus</taxon>
        <taxon>Pelargonium zonate spot virus</taxon>
    </lineage>
</organism>
<feature type="chain" id="PRO_0000402415" description="Replication protein 1a">
    <location>
        <begin position="1"/>
        <end position="962"/>
    </location>
</feature>
<feature type="domain" description="Alphavirus-like MT" evidence="2">
    <location>
        <begin position="71"/>
        <end position="270"/>
    </location>
</feature>
<feature type="domain" description="(+)RNA virus helicase ATP-binding">
    <location>
        <begin position="667"/>
        <end position="820"/>
    </location>
</feature>
<feature type="domain" description="(+)RNA virus helicase C-terminal">
    <location>
        <begin position="821"/>
        <end position="962"/>
    </location>
</feature>
<feature type="region of interest" description="Methyltransferase">
    <location>
        <begin position="79"/>
        <end position="356"/>
    </location>
</feature>
<feature type="region of interest" description="Disordered" evidence="3">
    <location>
        <begin position="536"/>
        <end position="561"/>
    </location>
</feature>
<feature type="region of interest" description="ATP-dependent helicase">
    <location>
        <begin position="693"/>
        <end position="941"/>
    </location>
</feature>
<feature type="compositionally biased region" description="Polar residues" evidence="3">
    <location>
        <begin position="546"/>
        <end position="561"/>
    </location>
</feature>
<proteinExistence type="inferred from homology"/>
<evidence type="ECO:0000250" key="1"/>
<evidence type="ECO:0000255" key="2">
    <source>
        <dbReference type="PROSITE-ProRule" id="PRU01079"/>
    </source>
</evidence>
<evidence type="ECO:0000256" key="3">
    <source>
        <dbReference type="SAM" id="MobiDB-lite"/>
    </source>
</evidence>
<evidence type="ECO:0000305" key="4"/>